<gene>
    <name type="primary">yccF</name>
    <name type="ordered locus">BSU02720</name>
</gene>
<protein>
    <recommendedName>
        <fullName>Uncharacterized protein YccF</fullName>
    </recommendedName>
</protein>
<organism>
    <name type="scientific">Bacillus subtilis (strain 168)</name>
    <dbReference type="NCBI Taxonomy" id="224308"/>
    <lineage>
        <taxon>Bacteria</taxon>
        <taxon>Bacillati</taxon>
        <taxon>Bacillota</taxon>
        <taxon>Bacilli</taxon>
        <taxon>Bacillales</taxon>
        <taxon>Bacillaceae</taxon>
        <taxon>Bacillus</taxon>
    </lineage>
</organism>
<name>YCCF_BACSU</name>
<dbReference type="EMBL" id="AB000617">
    <property type="protein sequence ID" value="BAA22233.1"/>
    <property type="molecule type" value="Genomic_DNA"/>
</dbReference>
<dbReference type="EMBL" id="AL009126">
    <property type="protein sequence ID" value="CAB12066.1"/>
    <property type="molecule type" value="Genomic_DNA"/>
</dbReference>
<dbReference type="PIR" id="G69754">
    <property type="entry name" value="G69754"/>
</dbReference>
<dbReference type="RefSeq" id="NP_388154.1">
    <property type="nucleotide sequence ID" value="NC_000964.3"/>
</dbReference>
<dbReference type="RefSeq" id="WP_003246276.1">
    <property type="nucleotide sequence ID" value="NZ_OZ025638.1"/>
</dbReference>
<dbReference type="SMR" id="O34478"/>
<dbReference type="FunCoup" id="O34478">
    <property type="interactions" value="45"/>
</dbReference>
<dbReference type="STRING" id="224308.BSU02720"/>
<dbReference type="jPOST" id="O34478"/>
<dbReference type="PaxDb" id="224308-BSU02720"/>
<dbReference type="EnsemblBacteria" id="CAB12066">
    <property type="protein sequence ID" value="CAB12066"/>
    <property type="gene ID" value="BSU_02720"/>
</dbReference>
<dbReference type="GeneID" id="938387"/>
<dbReference type="KEGG" id="bsu:BSU02720"/>
<dbReference type="PATRIC" id="fig|224308.179.peg.282"/>
<dbReference type="eggNOG" id="COG1405">
    <property type="taxonomic scope" value="Bacteria"/>
</dbReference>
<dbReference type="eggNOG" id="COG3012">
    <property type="taxonomic scope" value="Bacteria"/>
</dbReference>
<dbReference type="InParanoid" id="O34478"/>
<dbReference type="OrthoDB" id="6399948at2"/>
<dbReference type="BioCyc" id="BSUB:BSU02720-MONOMER"/>
<dbReference type="Proteomes" id="UP000001570">
    <property type="component" value="Chromosome"/>
</dbReference>
<dbReference type="GO" id="GO:0005524">
    <property type="term" value="F:ATP binding"/>
    <property type="evidence" value="ECO:0007669"/>
    <property type="project" value="UniProtKB-KW"/>
</dbReference>
<dbReference type="GO" id="GO:0003677">
    <property type="term" value="F:DNA binding"/>
    <property type="evidence" value="ECO:0007669"/>
    <property type="project" value="InterPro"/>
</dbReference>
<dbReference type="CDD" id="cd00043">
    <property type="entry name" value="CYCLIN_SF"/>
    <property type="match status" value="1"/>
</dbReference>
<dbReference type="Gene3D" id="3.10.450.50">
    <property type="match status" value="1"/>
</dbReference>
<dbReference type="Gene3D" id="1.10.472.10">
    <property type="entry name" value="Cyclin-like"/>
    <property type="match status" value="1"/>
</dbReference>
<dbReference type="InterPro" id="IPR036915">
    <property type="entry name" value="Cyclin-like_sf"/>
</dbReference>
<dbReference type="InterPro" id="IPR007889">
    <property type="entry name" value="HTH_Psq"/>
</dbReference>
<dbReference type="InterPro" id="IPR004027">
    <property type="entry name" value="SEC_C_motif"/>
</dbReference>
<dbReference type="Pfam" id="PF05225">
    <property type="entry name" value="HTH_psq"/>
    <property type="match status" value="1"/>
</dbReference>
<dbReference type="Pfam" id="PF02810">
    <property type="entry name" value="SEC-C"/>
    <property type="match status" value="1"/>
</dbReference>
<dbReference type="SUPFAM" id="SSF47954">
    <property type="entry name" value="Cyclin-like"/>
    <property type="match status" value="1"/>
</dbReference>
<dbReference type="SUPFAM" id="SSF103642">
    <property type="entry name" value="Sec-C motif"/>
    <property type="match status" value="1"/>
</dbReference>
<feature type="chain" id="PRO_0000049471" description="Uncharacterized protein YccF">
    <location>
        <begin position="1"/>
        <end position="358"/>
    </location>
</feature>
<feature type="binding site" evidence="1">
    <location>
        <begin position="207"/>
        <end position="214"/>
    </location>
    <ligand>
        <name>ATP</name>
        <dbReference type="ChEBI" id="CHEBI:30616"/>
    </ligand>
</feature>
<proteinExistence type="predicted"/>
<sequence>MGKVKRNAPCPCGSGKKYKKCCGSKVVDFPAELAAKEAKQIQEDLVEYAFTVHRESISGFINQHDFLSAMDRQTKDISVFNLGIWGIFFHPLAGEKTIFEEYLQKKGDSITRPKTREIVESWQSMTPALLLLKDLKEGIIHFEDVITAKQFEVEMDASNQDLPPVGSLILGYPIHEAEKAEFFMQFTIFPVKRTEALISKVKKYADAAVKDGKTPEDFMKQEFNNVLFALLAEKDEEPQAEKAEVSTVEWANDLEKETAAAIEEGMSGEEYPTELIPAVIDIWKTFCEKKSPVIRKPEAFAAAVEYYVNAISLNGASVSQAKLAKKYGVSASTISSRYKEIESTLQDEADRFAQALSS</sequence>
<accession>O34478</accession>
<reference key="1">
    <citation type="journal article" date="1997" name="Microbiology">
        <title>A 32 kb nucleotide sequence from the region of the lincomycin-resistance gene (22 degrees-25 degrees) of the Bacillus subtilis chromosome and identification of the site of the lin-2 mutation.</title>
        <authorList>
            <person name="Kumano M."/>
            <person name="Tamakoshi A."/>
            <person name="Yamane K."/>
        </authorList>
    </citation>
    <scope>NUCLEOTIDE SEQUENCE [GENOMIC DNA]</scope>
    <source>
        <strain>168</strain>
    </source>
</reference>
<reference key="2">
    <citation type="journal article" date="1997" name="Nature">
        <title>The complete genome sequence of the Gram-positive bacterium Bacillus subtilis.</title>
        <authorList>
            <person name="Kunst F."/>
            <person name="Ogasawara N."/>
            <person name="Moszer I."/>
            <person name="Albertini A.M."/>
            <person name="Alloni G."/>
            <person name="Azevedo V."/>
            <person name="Bertero M.G."/>
            <person name="Bessieres P."/>
            <person name="Bolotin A."/>
            <person name="Borchert S."/>
            <person name="Borriss R."/>
            <person name="Boursier L."/>
            <person name="Brans A."/>
            <person name="Braun M."/>
            <person name="Brignell S.C."/>
            <person name="Bron S."/>
            <person name="Brouillet S."/>
            <person name="Bruschi C.V."/>
            <person name="Caldwell B."/>
            <person name="Capuano V."/>
            <person name="Carter N.M."/>
            <person name="Choi S.-K."/>
            <person name="Codani J.-J."/>
            <person name="Connerton I.F."/>
            <person name="Cummings N.J."/>
            <person name="Daniel R.A."/>
            <person name="Denizot F."/>
            <person name="Devine K.M."/>
            <person name="Duesterhoeft A."/>
            <person name="Ehrlich S.D."/>
            <person name="Emmerson P.T."/>
            <person name="Entian K.-D."/>
            <person name="Errington J."/>
            <person name="Fabret C."/>
            <person name="Ferrari E."/>
            <person name="Foulger D."/>
            <person name="Fritz C."/>
            <person name="Fujita M."/>
            <person name="Fujita Y."/>
            <person name="Fuma S."/>
            <person name="Galizzi A."/>
            <person name="Galleron N."/>
            <person name="Ghim S.-Y."/>
            <person name="Glaser P."/>
            <person name="Goffeau A."/>
            <person name="Golightly E.J."/>
            <person name="Grandi G."/>
            <person name="Guiseppi G."/>
            <person name="Guy B.J."/>
            <person name="Haga K."/>
            <person name="Haiech J."/>
            <person name="Harwood C.R."/>
            <person name="Henaut A."/>
            <person name="Hilbert H."/>
            <person name="Holsappel S."/>
            <person name="Hosono S."/>
            <person name="Hullo M.-F."/>
            <person name="Itaya M."/>
            <person name="Jones L.-M."/>
            <person name="Joris B."/>
            <person name="Karamata D."/>
            <person name="Kasahara Y."/>
            <person name="Klaerr-Blanchard M."/>
            <person name="Klein C."/>
            <person name="Kobayashi Y."/>
            <person name="Koetter P."/>
            <person name="Koningstein G."/>
            <person name="Krogh S."/>
            <person name="Kumano M."/>
            <person name="Kurita K."/>
            <person name="Lapidus A."/>
            <person name="Lardinois S."/>
            <person name="Lauber J."/>
            <person name="Lazarevic V."/>
            <person name="Lee S.-M."/>
            <person name="Levine A."/>
            <person name="Liu H."/>
            <person name="Masuda S."/>
            <person name="Mauel C."/>
            <person name="Medigue C."/>
            <person name="Medina N."/>
            <person name="Mellado R.P."/>
            <person name="Mizuno M."/>
            <person name="Moestl D."/>
            <person name="Nakai S."/>
            <person name="Noback M."/>
            <person name="Noone D."/>
            <person name="O'Reilly M."/>
            <person name="Ogawa K."/>
            <person name="Ogiwara A."/>
            <person name="Oudega B."/>
            <person name="Park S.-H."/>
            <person name="Parro V."/>
            <person name="Pohl T.M."/>
            <person name="Portetelle D."/>
            <person name="Porwollik S."/>
            <person name="Prescott A.M."/>
            <person name="Presecan E."/>
            <person name="Pujic P."/>
            <person name="Purnelle B."/>
            <person name="Rapoport G."/>
            <person name="Rey M."/>
            <person name="Reynolds S."/>
            <person name="Rieger M."/>
            <person name="Rivolta C."/>
            <person name="Rocha E."/>
            <person name="Roche B."/>
            <person name="Rose M."/>
            <person name="Sadaie Y."/>
            <person name="Sato T."/>
            <person name="Scanlan E."/>
            <person name="Schleich S."/>
            <person name="Schroeter R."/>
            <person name="Scoffone F."/>
            <person name="Sekiguchi J."/>
            <person name="Sekowska A."/>
            <person name="Seror S.J."/>
            <person name="Serror P."/>
            <person name="Shin B.-S."/>
            <person name="Soldo B."/>
            <person name="Sorokin A."/>
            <person name="Tacconi E."/>
            <person name="Takagi T."/>
            <person name="Takahashi H."/>
            <person name="Takemaru K."/>
            <person name="Takeuchi M."/>
            <person name="Tamakoshi A."/>
            <person name="Tanaka T."/>
            <person name="Terpstra P."/>
            <person name="Tognoni A."/>
            <person name="Tosato V."/>
            <person name="Uchiyama S."/>
            <person name="Vandenbol M."/>
            <person name="Vannier F."/>
            <person name="Vassarotti A."/>
            <person name="Viari A."/>
            <person name="Wambutt R."/>
            <person name="Wedler E."/>
            <person name="Wedler H."/>
            <person name="Weitzenegger T."/>
            <person name="Winters P."/>
            <person name="Wipat A."/>
            <person name="Yamamoto H."/>
            <person name="Yamane K."/>
            <person name="Yasumoto K."/>
            <person name="Yata K."/>
            <person name="Yoshida K."/>
            <person name="Yoshikawa H.-F."/>
            <person name="Zumstein E."/>
            <person name="Yoshikawa H."/>
            <person name="Danchin A."/>
        </authorList>
    </citation>
    <scope>NUCLEOTIDE SEQUENCE [LARGE SCALE GENOMIC DNA]</scope>
    <source>
        <strain>168</strain>
    </source>
</reference>
<evidence type="ECO:0000255" key="1"/>
<keyword id="KW-0067">ATP-binding</keyword>
<keyword id="KW-0547">Nucleotide-binding</keyword>
<keyword id="KW-1185">Reference proteome</keyword>